<reference key="1">
    <citation type="journal article" date="2001" name="J. Bacteriol.">
        <title>Genome sequence and comparative analysis of the solvent-producing bacterium Clostridium acetobutylicum.</title>
        <authorList>
            <person name="Noelling J."/>
            <person name="Breton G."/>
            <person name="Omelchenko M.V."/>
            <person name="Makarova K.S."/>
            <person name="Zeng Q."/>
            <person name="Gibson R."/>
            <person name="Lee H.M."/>
            <person name="Dubois J."/>
            <person name="Qiu D."/>
            <person name="Hitti J."/>
            <person name="Wolf Y.I."/>
            <person name="Tatusov R.L."/>
            <person name="Sabathe F."/>
            <person name="Doucette-Stamm L.A."/>
            <person name="Soucaille P."/>
            <person name="Daly M.J."/>
            <person name="Bennett G.N."/>
            <person name="Koonin E.V."/>
            <person name="Smith D.R."/>
        </authorList>
    </citation>
    <scope>NUCLEOTIDE SEQUENCE [LARGE SCALE GENOMIC DNA]</scope>
    <source>
        <strain>ATCC 824 / DSM 792 / JCM 1419 / IAM 19013 / LMG 5710 / NBRC 13948 / NRRL B-527 / VKM B-1787 / 2291 / W</strain>
    </source>
</reference>
<name>MRAY_CLOAB</name>
<feature type="chain" id="PRO_0000108810" description="Phospho-N-acetylmuramoyl-pentapeptide-transferase">
    <location>
        <begin position="1"/>
        <end position="317"/>
    </location>
</feature>
<feature type="transmembrane region" description="Helical" evidence="1">
    <location>
        <begin position="3"/>
        <end position="23"/>
    </location>
</feature>
<feature type="transmembrane region" description="Helical" evidence="1">
    <location>
        <begin position="48"/>
        <end position="68"/>
    </location>
</feature>
<feature type="transmembrane region" description="Helical" evidence="1">
    <location>
        <begin position="72"/>
        <end position="92"/>
    </location>
</feature>
<feature type="transmembrane region" description="Helical" evidence="1">
    <location>
        <begin position="112"/>
        <end position="132"/>
    </location>
</feature>
<feature type="transmembrane region" description="Helical" evidence="1">
    <location>
        <begin position="141"/>
        <end position="161"/>
    </location>
</feature>
<feature type="transmembrane region" description="Helical" evidence="1">
    <location>
        <begin position="171"/>
        <end position="191"/>
    </location>
</feature>
<feature type="transmembrane region" description="Helical" evidence="1">
    <location>
        <begin position="193"/>
        <end position="213"/>
    </location>
</feature>
<feature type="transmembrane region" description="Helical" evidence="1">
    <location>
        <begin position="238"/>
        <end position="258"/>
    </location>
</feature>
<feature type="transmembrane region" description="Helical" evidence="1">
    <location>
        <begin position="297"/>
        <end position="317"/>
    </location>
</feature>
<evidence type="ECO:0000255" key="1">
    <source>
        <dbReference type="HAMAP-Rule" id="MF_00038"/>
    </source>
</evidence>
<accession>Q97H86</accession>
<dbReference type="EC" id="2.7.8.13" evidence="1"/>
<dbReference type="EMBL" id="AE001437">
    <property type="protein sequence ID" value="AAK80085.1"/>
    <property type="molecule type" value="Genomic_DNA"/>
</dbReference>
<dbReference type="PIR" id="B97162">
    <property type="entry name" value="B97162"/>
</dbReference>
<dbReference type="RefSeq" id="NP_348745.1">
    <property type="nucleotide sequence ID" value="NC_003030.1"/>
</dbReference>
<dbReference type="RefSeq" id="WP_010965426.1">
    <property type="nucleotide sequence ID" value="NC_003030.1"/>
</dbReference>
<dbReference type="SMR" id="Q97H86"/>
<dbReference type="STRING" id="272562.CA_C2127"/>
<dbReference type="GeneID" id="44998608"/>
<dbReference type="KEGG" id="cac:CA_C2127"/>
<dbReference type="PATRIC" id="fig|272562.8.peg.2329"/>
<dbReference type="eggNOG" id="COG0472">
    <property type="taxonomic scope" value="Bacteria"/>
</dbReference>
<dbReference type="HOGENOM" id="CLU_023982_0_1_9"/>
<dbReference type="OrthoDB" id="9805475at2"/>
<dbReference type="UniPathway" id="UPA00219"/>
<dbReference type="Proteomes" id="UP000000814">
    <property type="component" value="Chromosome"/>
</dbReference>
<dbReference type="GO" id="GO:0005886">
    <property type="term" value="C:plasma membrane"/>
    <property type="evidence" value="ECO:0007669"/>
    <property type="project" value="UniProtKB-SubCell"/>
</dbReference>
<dbReference type="GO" id="GO:0046872">
    <property type="term" value="F:metal ion binding"/>
    <property type="evidence" value="ECO:0007669"/>
    <property type="project" value="UniProtKB-KW"/>
</dbReference>
<dbReference type="GO" id="GO:0008963">
    <property type="term" value="F:phospho-N-acetylmuramoyl-pentapeptide-transferase activity"/>
    <property type="evidence" value="ECO:0007669"/>
    <property type="project" value="UniProtKB-UniRule"/>
</dbReference>
<dbReference type="GO" id="GO:0051992">
    <property type="term" value="F:UDP-N-acetylmuramoyl-L-alanyl-D-glutamyl-meso-2,6-diaminopimelyl-D-alanyl-D-alanine:undecaprenyl-phosphate transferase activity"/>
    <property type="evidence" value="ECO:0007669"/>
    <property type="project" value="RHEA"/>
</dbReference>
<dbReference type="GO" id="GO:0051301">
    <property type="term" value="P:cell division"/>
    <property type="evidence" value="ECO:0007669"/>
    <property type="project" value="UniProtKB-KW"/>
</dbReference>
<dbReference type="GO" id="GO:0071555">
    <property type="term" value="P:cell wall organization"/>
    <property type="evidence" value="ECO:0007669"/>
    <property type="project" value="UniProtKB-KW"/>
</dbReference>
<dbReference type="GO" id="GO:0009252">
    <property type="term" value="P:peptidoglycan biosynthetic process"/>
    <property type="evidence" value="ECO:0007669"/>
    <property type="project" value="UniProtKB-UniRule"/>
</dbReference>
<dbReference type="GO" id="GO:0008360">
    <property type="term" value="P:regulation of cell shape"/>
    <property type="evidence" value="ECO:0007669"/>
    <property type="project" value="UniProtKB-KW"/>
</dbReference>
<dbReference type="CDD" id="cd06852">
    <property type="entry name" value="GT_MraY"/>
    <property type="match status" value="1"/>
</dbReference>
<dbReference type="HAMAP" id="MF_00038">
    <property type="entry name" value="MraY"/>
    <property type="match status" value="1"/>
</dbReference>
<dbReference type="InterPro" id="IPR000715">
    <property type="entry name" value="Glycosyl_transferase_4"/>
</dbReference>
<dbReference type="InterPro" id="IPR003524">
    <property type="entry name" value="PNAcMuramoyl-5peptid_Trfase"/>
</dbReference>
<dbReference type="InterPro" id="IPR018480">
    <property type="entry name" value="PNAcMuramoyl-5peptid_Trfase_CS"/>
</dbReference>
<dbReference type="NCBIfam" id="TIGR00445">
    <property type="entry name" value="mraY"/>
    <property type="match status" value="1"/>
</dbReference>
<dbReference type="PANTHER" id="PTHR22926">
    <property type="entry name" value="PHOSPHO-N-ACETYLMURAMOYL-PENTAPEPTIDE-TRANSFERASE"/>
    <property type="match status" value="1"/>
</dbReference>
<dbReference type="PANTHER" id="PTHR22926:SF5">
    <property type="entry name" value="PHOSPHO-N-ACETYLMURAMOYL-PENTAPEPTIDE-TRANSFERASE HOMOLOG"/>
    <property type="match status" value="1"/>
</dbReference>
<dbReference type="Pfam" id="PF00953">
    <property type="entry name" value="Glycos_transf_4"/>
    <property type="match status" value="1"/>
</dbReference>
<dbReference type="Pfam" id="PF10555">
    <property type="entry name" value="MraY_sig1"/>
    <property type="match status" value="1"/>
</dbReference>
<dbReference type="PROSITE" id="PS01347">
    <property type="entry name" value="MRAY_1"/>
    <property type="match status" value="1"/>
</dbReference>
<dbReference type="PROSITE" id="PS01348">
    <property type="entry name" value="MRAY_2"/>
    <property type="match status" value="1"/>
</dbReference>
<sequence length="317" mass="34962">MGVIIYSVLISFLFSILQGPLFIPILHKLKFGQPIREDGPKNHMKKAGTPTMGGIIFITTAIIAMIIMRKNLNSNAVFAFVCFFSFAMIGLIDDSLKILHKKNEGLTSKQKFLLQIIVSAAISYYAYIRFGSDTFIPFLKITWTLPPIVYMAAVVFYFVAVTNAVNLTDGLDGLASSVTILVVTFFTVVSFSWHQYELSVFCGIIVGILLGFLKYNSYPAQIFMGDTGSIGLGGAVAAIALVLKLPLLVIIVGGIYVIEVLSDIIQVSYFKLTGKRVFKMAPIHHHFEKLGWHETKVVSVFSIVTVILCLIAFLSLI</sequence>
<protein>
    <recommendedName>
        <fullName evidence="1">Phospho-N-acetylmuramoyl-pentapeptide-transferase</fullName>
        <ecNumber evidence="1">2.7.8.13</ecNumber>
    </recommendedName>
    <alternativeName>
        <fullName evidence="1">UDP-MurNAc-pentapeptide phosphotransferase</fullName>
    </alternativeName>
</protein>
<organism>
    <name type="scientific">Clostridium acetobutylicum (strain ATCC 824 / DSM 792 / JCM 1419 / IAM 19013 / LMG 5710 / NBRC 13948 / NRRL B-527 / VKM B-1787 / 2291 / W)</name>
    <dbReference type="NCBI Taxonomy" id="272562"/>
    <lineage>
        <taxon>Bacteria</taxon>
        <taxon>Bacillati</taxon>
        <taxon>Bacillota</taxon>
        <taxon>Clostridia</taxon>
        <taxon>Eubacteriales</taxon>
        <taxon>Clostridiaceae</taxon>
        <taxon>Clostridium</taxon>
    </lineage>
</organism>
<keyword id="KW-0131">Cell cycle</keyword>
<keyword id="KW-0132">Cell division</keyword>
<keyword id="KW-1003">Cell membrane</keyword>
<keyword id="KW-0133">Cell shape</keyword>
<keyword id="KW-0961">Cell wall biogenesis/degradation</keyword>
<keyword id="KW-0460">Magnesium</keyword>
<keyword id="KW-0472">Membrane</keyword>
<keyword id="KW-0479">Metal-binding</keyword>
<keyword id="KW-0573">Peptidoglycan synthesis</keyword>
<keyword id="KW-1185">Reference proteome</keyword>
<keyword id="KW-0808">Transferase</keyword>
<keyword id="KW-0812">Transmembrane</keyword>
<keyword id="KW-1133">Transmembrane helix</keyword>
<proteinExistence type="inferred from homology"/>
<gene>
    <name evidence="1" type="primary">mraY</name>
    <name type="ordered locus">CA_C2127</name>
</gene>
<comment type="function">
    <text evidence="1">Catalyzes the initial step of the lipid cycle reactions in the biosynthesis of the cell wall peptidoglycan: transfers peptidoglycan precursor phospho-MurNAc-pentapeptide from UDP-MurNAc-pentapeptide onto the lipid carrier undecaprenyl phosphate, yielding undecaprenyl-pyrophosphoryl-MurNAc-pentapeptide, known as lipid I.</text>
</comment>
<comment type="catalytic activity">
    <reaction evidence="1">
        <text>UDP-N-acetyl-alpha-D-muramoyl-L-alanyl-gamma-D-glutamyl-meso-2,6-diaminopimeloyl-D-alanyl-D-alanine + di-trans,octa-cis-undecaprenyl phosphate = di-trans,octa-cis-undecaprenyl diphospho-N-acetyl-alpha-D-muramoyl-L-alanyl-D-glutamyl-meso-2,6-diaminopimeloyl-D-alanyl-D-alanine + UMP</text>
        <dbReference type="Rhea" id="RHEA:28386"/>
        <dbReference type="ChEBI" id="CHEBI:57865"/>
        <dbReference type="ChEBI" id="CHEBI:60392"/>
        <dbReference type="ChEBI" id="CHEBI:61386"/>
        <dbReference type="ChEBI" id="CHEBI:61387"/>
        <dbReference type="EC" id="2.7.8.13"/>
    </reaction>
</comment>
<comment type="cofactor">
    <cofactor evidence="1">
        <name>Mg(2+)</name>
        <dbReference type="ChEBI" id="CHEBI:18420"/>
    </cofactor>
</comment>
<comment type="pathway">
    <text evidence="1">Cell wall biogenesis; peptidoglycan biosynthesis.</text>
</comment>
<comment type="subcellular location">
    <subcellularLocation>
        <location evidence="1">Cell membrane</location>
        <topology evidence="1">Multi-pass membrane protein</topology>
    </subcellularLocation>
</comment>
<comment type="similarity">
    <text evidence="1">Belongs to the glycosyltransferase 4 family. MraY subfamily.</text>
</comment>